<keyword id="KW-0024">Alternative initiation</keyword>
<keyword id="KW-0025">Alternative splicing</keyword>
<keyword id="KW-0167">Capsid protein</keyword>
<keyword id="KW-0238">DNA-binding</keyword>
<keyword id="KW-1038">Host endoplasmic reticulum</keyword>
<keyword id="KW-1043">Host membrane</keyword>
<keyword id="KW-1048">Host nucleus</keyword>
<keyword id="KW-0426">Late protein</keyword>
<keyword id="KW-0449">Lipoprotein</keyword>
<keyword id="KW-0472">Membrane</keyword>
<keyword id="KW-0519">Myristate</keyword>
<keyword id="KW-0812">Transmembrane</keyword>
<keyword id="KW-1133">Transmembrane helix</keyword>
<keyword id="KW-1163">Viral penetration into host nucleus</keyword>
<keyword id="KW-0946">Virion</keyword>
<keyword id="KW-1160">Virus entry into host cell</keyword>
<accession>P03097</accession>
<accession>Q76R69</accession>
<accession>Q76W00</accession>
<accession>Q84245</accession>
<organism>
    <name type="scientific">Murine polyomavirus (strain A3)</name>
    <name type="common">MPyV</name>
    <dbReference type="NCBI Taxonomy" id="157703"/>
    <lineage>
        <taxon>Viruses</taxon>
        <taxon>Monodnaviria</taxon>
        <taxon>Shotokuvirae</taxon>
        <taxon>Cossaviricota</taxon>
        <taxon>Papovaviricetes</taxon>
        <taxon>Sepolyvirales</taxon>
        <taxon>Polyomaviridae</taxon>
        <taxon>Alphapolyomavirus</taxon>
        <taxon>Mus musculus polyomavirus 1</taxon>
    </lineage>
</organism>
<sequence>MGAALTILVDLIEGLAEVSTLTGLSAEAILSGEALAALDGEITALTLEGVMSSETALATMGISEEVYGFVSTVPVFVNRTAGAIWLMQTVQGASTISLGIQRYLHNEEVPTVNRNMALIPWRDPALLDIYFPGVNQFAHALNVVHDWGHGLLHSVGRYVWQMVVQETQHRLEGAVRELTVRQTHTFLDGLARLLENTRWVVSNAPQSAIDAINRGASSVSSGYSSLSDYYRQLGLNPPQRRALFNRIEGSMGNGGPTPAAHIQDESGEVIKFYQAPGGAHQRVTPDWMLPLILGLYGDITPTWATVIEEDGPQKKKRRL</sequence>
<comment type="function">
    <molecule>Isoform VP2</molecule>
    <text evidence="1">Structural protein that resides within the core of the capsid surrounded by 72 VP1 pentamers. Participates in host cell receptor binding together with VP1. Following virus endocytosis and trafficking to the endoplasmic reticulum, VP2 and VP3 form oligomers and integrate into the endoplasmic reticulum membrane. Heterooligomer VP2-VP3 may create a viroporin for transporting the viral genome across the endoplasmic reticulum membrane to the cytoplasm. Nuclear entry of the viral DNA involves the selective exposure and importin recognition of VP2 or VP3 nuclear localization signal (shared C-terminus). Plays a role in virion assembly within the nucleus in particular through a DNA-binding domain located in the C-terminal region. A N-terminal myristoylation suggests a scaffold function for virion assembly (By similarity).</text>
</comment>
<comment type="function">
    <molecule>Isoform VP3</molecule>
    <text evidence="1">Structural protein that resides within the core of the capsid surrounded by 72 VP1 pentamers. Following virus endocytosis and trafficking to the endoplasmic reticulum, VP2 and VP3 form oligomers and integrate into the endoplasmic reticulum membrane. Heterooligomer VP2-VP3 may create a viroporin for transporting the viral genome across the endoplasmic reticulum membrane to the cytoplasm. Nuclear entry of the viral DNA involves the selective exposure and importin recognition of VP2 or VP3 nuclear localization signal (shared C-terminus). Plays a role in virion assembly within the nucleus (By similarity).</text>
</comment>
<comment type="subunit">
    <text evidence="1">Isoform VP2 forms homooligomers, and heterooligomers with VP3 in the endoplasmic reticulum membrane. Interacts (via D1 domain) with VP1.</text>
</comment>
<comment type="subunit">
    <molecule>Isoform VP3</molecule>
    <text>Interacts (via D1 domain) with VP1.</text>
</comment>
<comment type="subcellular location">
    <molecule>Isoform VP2</molecule>
    <subcellularLocation>
        <location>Virion</location>
    </subcellularLocation>
    <subcellularLocation>
        <location>Host nucleus</location>
    </subcellularLocation>
    <subcellularLocation>
        <location>Host endoplasmic reticulum</location>
    </subcellularLocation>
    <subcellularLocation>
        <location evidence="1">Host endoplasmic reticulum membrane</location>
    </subcellularLocation>
</comment>
<comment type="subcellular location">
    <molecule>Isoform VP3</molecule>
    <subcellularLocation>
        <location>Virion</location>
    </subcellularLocation>
    <subcellularLocation>
        <location>Host nucleus</location>
    </subcellularLocation>
    <subcellularLocation>
        <location>Host endoplasmic reticulum</location>
    </subcellularLocation>
    <subcellularLocation>
        <location evidence="1">Host endoplasmic reticulum membrane</location>
    </subcellularLocation>
</comment>
<comment type="alternative products">
    <event type="alternative splicing"/>
    <event type="alternative initiation"/>
    <isoform>
        <id>P03097-1</id>
        <name>VP2</name>
        <name>Minor capsid protein VP2</name>
        <sequence type="displayed"/>
    </isoform>
    <isoform>
        <id>P03097-2</id>
        <name>VP3</name>
        <name>Minor capsid protein VP3</name>
        <sequence type="described" ref="VSP_018921"/>
    </isoform>
    <isoform>
        <id>P03091-1</id>
        <name>VP1</name>
        <sequence type="external"/>
    </isoform>
</comment>
<comment type="miscellaneous">
    <molecule>Isoform VP2</molecule>
    <text>Produced by alternative splicing of the late mRNA.</text>
</comment>
<comment type="miscellaneous">
    <molecule>Isoform VP3</molecule>
    <text evidence="3">Produced by alternative initiation at Met-116 of isoform VP2.</text>
</comment>
<comment type="similarity">
    <text evidence="3">Belongs to the polyomaviruses capsid protein VP2 family.</text>
</comment>
<name>VP2_POVM3</name>
<proteinExistence type="inferred from homology"/>
<feature type="initiator methionine" description="Removed; by host" evidence="1">
    <location>
        <position position="1"/>
    </location>
</feature>
<feature type="chain" id="PRO_0000039215" description="Minor capsid protein VP2">
    <location>
        <begin position="2"/>
        <end position="319"/>
    </location>
</feature>
<feature type="transmembrane region" description="Helical" evidence="2">
    <location>
        <begin position="287"/>
        <end position="307"/>
    </location>
</feature>
<feature type="region of interest" description="D1" evidence="1">
    <location>
        <begin position="266"/>
        <end position="301"/>
    </location>
</feature>
<feature type="region of interest" description="DNA-binding" evidence="1">
    <location>
        <begin position="306"/>
        <end position="319"/>
    </location>
</feature>
<feature type="short sequence motif" description="Nuclear localization signal" evidence="1">
    <location>
        <begin position="311"/>
        <end position="319"/>
    </location>
</feature>
<feature type="lipid moiety-binding region" description="N-myristoyl glycine; by host" evidence="1">
    <location>
        <position position="2"/>
    </location>
</feature>
<feature type="splice variant" id="VSP_018921" description="In isoform VP3." evidence="3">
    <location>
        <begin position="1"/>
        <end position="115"/>
    </location>
</feature>
<organismHost>
    <name type="scientific">Mus musculus</name>
    <name type="common">Mouse</name>
    <dbReference type="NCBI Taxonomy" id="10090"/>
</organismHost>
<reference key="1">
    <citation type="journal article" date="1979" name="Cell">
        <title>Nucleotide sequence and genetic organization of the polyoma late region: features common to the polyoma early region and SV40.</title>
        <authorList>
            <person name="Deininger P."/>
            <person name="Esty A."/>
            <person name="LaPorte P."/>
            <person name="Friedmann T."/>
        </authorList>
    </citation>
    <scope>NUCLEOTIDE SEQUENCE [GENOMIC DNA]</scope>
</reference>
<reference key="2">
    <citation type="journal article" date="1980" name="Nucleic Acids Res.">
        <title>The nucleotide sequence and restriction enzyme sites of the polyoma genome.</title>
        <authorList>
            <person name="Deininger P.L."/>
            <person name="Esty A."/>
            <person name="LaPorte P."/>
            <person name="Hsu H."/>
            <person name="Friedmann T."/>
        </authorList>
    </citation>
    <scope>NUCLEOTIDE SEQUENCE [GENOMIC DNA]</scope>
</reference>
<reference key="3">
    <citation type="journal article" date="2009" name="Virology">
        <title>The Polyomaviridae: Contributions of virus structure to our understanding of virus receptors and infectious entry.</title>
        <authorList>
            <person name="Neu U."/>
            <person name="Stehle T."/>
            <person name="Atwood W.J."/>
        </authorList>
    </citation>
    <scope>REVIEW</scope>
</reference>
<protein>
    <recommendedName>
        <fullName>Minor capsid protein VP2</fullName>
    </recommendedName>
    <alternativeName>
        <fullName>Minor structural protein VP2</fullName>
    </alternativeName>
</protein>
<dbReference type="EMBL" id="V01151">
    <property type="protein sequence ID" value="CAA24466.1"/>
    <property type="molecule type" value="Genomic_DNA"/>
</dbReference>
<dbReference type="EMBL" id="V01151">
    <property type="protein sequence ID" value="CAA24467.1"/>
    <property type="molecule type" value="Genomic_DNA"/>
</dbReference>
<dbReference type="EMBL" id="J02289">
    <property type="protein sequence ID" value="AAA46876.1"/>
    <property type="molecule type" value="Genomic_DNA"/>
</dbReference>
<dbReference type="EMBL" id="J02289">
    <property type="protein sequence ID" value="AAA46877.1"/>
    <property type="molecule type" value="Genomic_DNA"/>
</dbReference>
<dbReference type="Proteomes" id="UP000006847">
    <property type="component" value="Genome"/>
</dbReference>
<dbReference type="GO" id="GO:0043657">
    <property type="term" value="C:host cell"/>
    <property type="evidence" value="ECO:0007669"/>
    <property type="project" value="GOC"/>
</dbReference>
<dbReference type="GO" id="GO:0044167">
    <property type="term" value="C:host cell endoplasmic reticulum membrane"/>
    <property type="evidence" value="ECO:0007669"/>
    <property type="project" value="UniProtKB-SubCell"/>
</dbReference>
<dbReference type="GO" id="GO:0042025">
    <property type="term" value="C:host cell nucleus"/>
    <property type="evidence" value="ECO:0007669"/>
    <property type="project" value="UniProtKB-SubCell"/>
</dbReference>
<dbReference type="GO" id="GO:0016020">
    <property type="term" value="C:membrane"/>
    <property type="evidence" value="ECO:0007669"/>
    <property type="project" value="UniProtKB-KW"/>
</dbReference>
<dbReference type="GO" id="GO:0019028">
    <property type="term" value="C:viral capsid"/>
    <property type="evidence" value="ECO:0007669"/>
    <property type="project" value="UniProtKB-KW"/>
</dbReference>
<dbReference type="GO" id="GO:0003677">
    <property type="term" value="F:DNA binding"/>
    <property type="evidence" value="ECO:0007669"/>
    <property type="project" value="UniProtKB-KW"/>
</dbReference>
<dbReference type="GO" id="GO:0005198">
    <property type="term" value="F:structural molecule activity"/>
    <property type="evidence" value="ECO:0007669"/>
    <property type="project" value="InterPro"/>
</dbReference>
<dbReference type="GO" id="GO:0046718">
    <property type="term" value="P:symbiont entry into host cell"/>
    <property type="evidence" value="ECO:0007669"/>
    <property type="project" value="UniProtKB-KW"/>
</dbReference>
<dbReference type="GO" id="GO:0075732">
    <property type="term" value="P:viral penetration into host nucleus"/>
    <property type="evidence" value="ECO:0007669"/>
    <property type="project" value="UniProtKB-KW"/>
</dbReference>
<dbReference type="InterPro" id="IPR001070">
    <property type="entry name" value="Polyoma_coat_VP2"/>
</dbReference>
<dbReference type="Pfam" id="PF00761">
    <property type="entry name" value="Polyoma_coat2"/>
    <property type="match status" value="1"/>
</dbReference>
<dbReference type="PIRSF" id="PIRSF003377">
    <property type="entry name" value="Polyoma_coat2"/>
    <property type="match status" value="1"/>
</dbReference>
<evidence type="ECO:0000250" key="1"/>
<evidence type="ECO:0000255" key="2"/>
<evidence type="ECO:0000305" key="3"/>